<proteinExistence type="inferred from homology"/>
<protein>
    <recommendedName>
        <fullName evidence="1">Methylglyoxal synthase</fullName>
        <shortName evidence="1">MGS</shortName>
        <ecNumber evidence="1">4.2.3.3</ecNumber>
    </recommendedName>
</protein>
<reference key="1">
    <citation type="journal article" date="2003" name="Nature">
        <title>Unique physiological and pathogenic features of Leptospira interrogans revealed by whole-genome sequencing.</title>
        <authorList>
            <person name="Ren S.-X."/>
            <person name="Fu G."/>
            <person name="Jiang X.-G."/>
            <person name="Zeng R."/>
            <person name="Miao Y.-G."/>
            <person name="Xu H."/>
            <person name="Zhang Y.-X."/>
            <person name="Xiong H."/>
            <person name="Lu G."/>
            <person name="Lu L.-F."/>
            <person name="Jiang H.-Q."/>
            <person name="Jia J."/>
            <person name="Tu Y.-F."/>
            <person name="Jiang J.-X."/>
            <person name="Gu W.-Y."/>
            <person name="Zhang Y.-Q."/>
            <person name="Cai Z."/>
            <person name="Sheng H.-H."/>
            <person name="Yin H.-F."/>
            <person name="Zhang Y."/>
            <person name="Zhu G.-F."/>
            <person name="Wan M."/>
            <person name="Huang H.-L."/>
            <person name="Qian Z."/>
            <person name="Wang S.-Y."/>
            <person name="Ma W."/>
            <person name="Yao Z.-J."/>
            <person name="Shen Y."/>
            <person name="Qiang B.-Q."/>
            <person name="Xia Q.-C."/>
            <person name="Guo X.-K."/>
            <person name="Danchin A."/>
            <person name="Saint Girons I."/>
            <person name="Somerville R.L."/>
            <person name="Wen Y.-M."/>
            <person name="Shi M.-H."/>
            <person name="Chen Z."/>
            <person name="Xu J.-G."/>
            <person name="Zhao G.-P."/>
        </authorList>
    </citation>
    <scope>NUCLEOTIDE SEQUENCE [LARGE SCALE GENOMIC DNA]</scope>
    <source>
        <strain>56601</strain>
    </source>
</reference>
<evidence type="ECO:0000255" key="1">
    <source>
        <dbReference type="HAMAP-Rule" id="MF_00549"/>
    </source>
</evidence>
<organism>
    <name type="scientific">Leptospira interrogans serogroup Icterohaemorrhagiae serovar Lai (strain 56601)</name>
    <dbReference type="NCBI Taxonomy" id="189518"/>
    <lineage>
        <taxon>Bacteria</taxon>
        <taxon>Pseudomonadati</taxon>
        <taxon>Spirochaetota</taxon>
        <taxon>Spirochaetia</taxon>
        <taxon>Leptospirales</taxon>
        <taxon>Leptospiraceae</taxon>
        <taxon>Leptospira</taxon>
    </lineage>
</organism>
<gene>
    <name evidence="1" type="primary">mgsA</name>
    <name type="ordered locus">LA_0909</name>
</gene>
<name>MGSA_LEPIN</name>
<sequence length="148" mass="16727">MKEVSVPAIKRIVLIAHDNRKEDLVNWVKTHREILSKHQLYGTGTTGKLISEETELPVYRFLSGPLGGDQQIGAKIAEGDLDIVIFFWDPLTAQPHDPDVKALLRIAVLYNVPMACNRSTADYMISSPQFTKTYKKILLSYNTKVKKD</sequence>
<dbReference type="EC" id="4.2.3.3" evidence="1"/>
<dbReference type="EMBL" id="AE010300">
    <property type="protein sequence ID" value="AAN48108.1"/>
    <property type="molecule type" value="Genomic_DNA"/>
</dbReference>
<dbReference type="RefSeq" id="NP_711090.1">
    <property type="nucleotide sequence ID" value="NC_004342.2"/>
</dbReference>
<dbReference type="RefSeq" id="WP_000665953.1">
    <property type="nucleotide sequence ID" value="NC_004342.2"/>
</dbReference>
<dbReference type="SMR" id="Q8F7N5"/>
<dbReference type="FunCoup" id="Q8F7N5">
    <property type="interactions" value="58"/>
</dbReference>
<dbReference type="STRING" id="189518.LA_0909"/>
<dbReference type="PaxDb" id="189518-LA_0909"/>
<dbReference type="EnsemblBacteria" id="AAN48108">
    <property type="protein sequence ID" value="AAN48108"/>
    <property type="gene ID" value="LA_0909"/>
</dbReference>
<dbReference type="KEGG" id="lil:LA_0909"/>
<dbReference type="PATRIC" id="fig|189518.3.peg.910"/>
<dbReference type="HOGENOM" id="CLU_120420_0_1_12"/>
<dbReference type="InParanoid" id="Q8F7N5"/>
<dbReference type="OrthoDB" id="9787147at2"/>
<dbReference type="Proteomes" id="UP000001408">
    <property type="component" value="Chromosome I"/>
</dbReference>
<dbReference type="GO" id="GO:0005829">
    <property type="term" value="C:cytosol"/>
    <property type="evidence" value="ECO:0000318"/>
    <property type="project" value="GO_Central"/>
</dbReference>
<dbReference type="GO" id="GO:0008929">
    <property type="term" value="F:methylglyoxal synthase activity"/>
    <property type="evidence" value="ECO:0000318"/>
    <property type="project" value="GO_Central"/>
</dbReference>
<dbReference type="GO" id="GO:0019242">
    <property type="term" value="P:methylglyoxal biosynthetic process"/>
    <property type="evidence" value="ECO:0000318"/>
    <property type="project" value="GO_Central"/>
</dbReference>
<dbReference type="CDD" id="cd01422">
    <property type="entry name" value="MGS"/>
    <property type="match status" value="1"/>
</dbReference>
<dbReference type="FunFam" id="3.40.50.1380:FF:000006">
    <property type="entry name" value="Methylglyoxal synthase"/>
    <property type="match status" value="1"/>
</dbReference>
<dbReference type="Gene3D" id="3.40.50.1380">
    <property type="entry name" value="Methylglyoxal synthase-like domain"/>
    <property type="match status" value="1"/>
</dbReference>
<dbReference type="HAMAP" id="MF_00549">
    <property type="entry name" value="Methylglyoxal_synth"/>
    <property type="match status" value="1"/>
</dbReference>
<dbReference type="InterPro" id="IPR004363">
    <property type="entry name" value="Methylgl_synth"/>
</dbReference>
<dbReference type="InterPro" id="IPR018148">
    <property type="entry name" value="Methylglyoxal_synth_AS"/>
</dbReference>
<dbReference type="InterPro" id="IPR011607">
    <property type="entry name" value="MGS-like_dom"/>
</dbReference>
<dbReference type="InterPro" id="IPR036914">
    <property type="entry name" value="MGS-like_dom_sf"/>
</dbReference>
<dbReference type="NCBIfam" id="TIGR00160">
    <property type="entry name" value="MGSA"/>
    <property type="match status" value="1"/>
</dbReference>
<dbReference type="NCBIfam" id="NF003559">
    <property type="entry name" value="PRK05234.1"/>
    <property type="match status" value="1"/>
</dbReference>
<dbReference type="PANTHER" id="PTHR30492">
    <property type="entry name" value="METHYLGLYOXAL SYNTHASE"/>
    <property type="match status" value="1"/>
</dbReference>
<dbReference type="PANTHER" id="PTHR30492:SF0">
    <property type="entry name" value="METHYLGLYOXAL SYNTHASE"/>
    <property type="match status" value="1"/>
</dbReference>
<dbReference type="Pfam" id="PF02142">
    <property type="entry name" value="MGS"/>
    <property type="match status" value="1"/>
</dbReference>
<dbReference type="PIRSF" id="PIRSF006614">
    <property type="entry name" value="Methylglyox_syn"/>
    <property type="match status" value="1"/>
</dbReference>
<dbReference type="SMART" id="SM00851">
    <property type="entry name" value="MGS"/>
    <property type="match status" value="1"/>
</dbReference>
<dbReference type="SUPFAM" id="SSF52335">
    <property type="entry name" value="Methylglyoxal synthase-like"/>
    <property type="match status" value="1"/>
</dbReference>
<dbReference type="PROSITE" id="PS01335">
    <property type="entry name" value="METHYLGLYOXAL_SYNTH"/>
    <property type="match status" value="1"/>
</dbReference>
<dbReference type="PROSITE" id="PS51855">
    <property type="entry name" value="MGS"/>
    <property type="match status" value="1"/>
</dbReference>
<comment type="function">
    <text evidence="1">Catalyzes the formation of methylglyoxal from dihydroxyacetone phosphate.</text>
</comment>
<comment type="catalytic activity">
    <reaction evidence="1">
        <text>dihydroxyacetone phosphate = methylglyoxal + phosphate</text>
        <dbReference type="Rhea" id="RHEA:17937"/>
        <dbReference type="ChEBI" id="CHEBI:17158"/>
        <dbReference type="ChEBI" id="CHEBI:43474"/>
        <dbReference type="ChEBI" id="CHEBI:57642"/>
        <dbReference type="EC" id="4.2.3.3"/>
    </reaction>
</comment>
<comment type="similarity">
    <text evidence="1">Belongs to the methylglyoxal synthase family.</text>
</comment>
<feature type="chain" id="PRO_0000178633" description="Methylglyoxal synthase">
    <location>
        <begin position="1"/>
        <end position="148"/>
    </location>
</feature>
<feature type="domain" description="MGS-like" evidence="1">
    <location>
        <begin position="4"/>
        <end position="148"/>
    </location>
</feature>
<feature type="active site" description="Proton donor/acceptor" evidence="1">
    <location>
        <position position="69"/>
    </location>
</feature>
<feature type="binding site" evidence="1">
    <location>
        <position position="17"/>
    </location>
    <ligand>
        <name>substrate</name>
    </ligand>
</feature>
<feature type="binding site" evidence="1">
    <location>
        <position position="21"/>
    </location>
    <ligand>
        <name>substrate</name>
    </ligand>
</feature>
<feature type="binding site" evidence="1">
    <location>
        <begin position="43"/>
        <end position="46"/>
    </location>
    <ligand>
        <name>substrate</name>
    </ligand>
</feature>
<feature type="binding site" evidence="1">
    <location>
        <begin position="63"/>
        <end position="64"/>
    </location>
    <ligand>
        <name>substrate</name>
    </ligand>
</feature>
<feature type="binding site" evidence="1">
    <location>
        <position position="96"/>
    </location>
    <ligand>
        <name>substrate</name>
    </ligand>
</feature>
<accession>Q8F7N5</accession>
<keyword id="KW-0456">Lyase</keyword>
<keyword id="KW-1185">Reference proteome</keyword>